<evidence type="ECO:0000255" key="1">
    <source>
        <dbReference type="HAMAP-Rule" id="MF_03139"/>
    </source>
</evidence>
<protein>
    <recommendedName>
        <fullName evidence="1">Cyanate hydratase</fullName>
        <shortName evidence="1">Cyanase</shortName>
        <ecNumber evidence="1">4.2.1.104</ecNumber>
    </recommendedName>
    <alternativeName>
        <fullName evidence="1">Cyanate hydrolase</fullName>
    </alternativeName>
    <alternativeName>
        <fullName evidence="1">Cyanate lyase</fullName>
    </alternativeName>
</protein>
<feature type="chain" id="PRO_0000403256" description="Cyanate hydratase">
    <location>
        <begin position="1"/>
        <end position="160"/>
    </location>
</feature>
<feature type="active site" evidence="1">
    <location>
        <position position="100"/>
    </location>
</feature>
<feature type="active site" evidence="1">
    <location>
        <position position="103"/>
    </location>
</feature>
<feature type="active site" evidence="1">
    <location>
        <position position="126"/>
    </location>
</feature>
<comment type="function">
    <text evidence="1">Catalyzes the reaction of cyanate with bicarbonate to produce ammonia and carbon dioxide.</text>
</comment>
<comment type="catalytic activity">
    <reaction evidence="1">
        <text>cyanate + hydrogencarbonate + 3 H(+) = NH4(+) + 2 CO2</text>
        <dbReference type="Rhea" id="RHEA:11120"/>
        <dbReference type="ChEBI" id="CHEBI:15378"/>
        <dbReference type="ChEBI" id="CHEBI:16526"/>
        <dbReference type="ChEBI" id="CHEBI:17544"/>
        <dbReference type="ChEBI" id="CHEBI:28938"/>
        <dbReference type="ChEBI" id="CHEBI:29195"/>
        <dbReference type="EC" id="4.2.1.104"/>
    </reaction>
</comment>
<comment type="similarity">
    <text evidence="1">Belongs to the cyanase family.</text>
</comment>
<keyword id="KW-0456">Lyase</keyword>
<keyword id="KW-1185">Reference proteome</keyword>
<dbReference type="EC" id="4.2.1.104" evidence="1"/>
<dbReference type="EMBL" id="DS027696">
    <property type="protein sequence ID" value="EAW19219.1"/>
    <property type="molecule type" value="Genomic_DNA"/>
</dbReference>
<dbReference type="RefSeq" id="XP_001261116.1">
    <property type="nucleotide sequence ID" value="XM_001261115.1"/>
</dbReference>
<dbReference type="SMR" id="A1DIL2"/>
<dbReference type="STRING" id="331117.A1DIL2"/>
<dbReference type="EnsemblFungi" id="EAW19219">
    <property type="protein sequence ID" value="EAW19219"/>
    <property type="gene ID" value="NFIA_091790"/>
</dbReference>
<dbReference type="GeneID" id="4587674"/>
<dbReference type="KEGG" id="nfi:NFIA_091790"/>
<dbReference type="VEuPathDB" id="FungiDB:NFIA_091790"/>
<dbReference type="eggNOG" id="ENOG502S3YJ">
    <property type="taxonomic scope" value="Eukaryota"/>
</dbReference>
<dbReference type="HOGENOM" id="CLU_103452_0_0_1"/>
<dbReference type="OMA" id="YELVMIN"/>
<dbReference type="OrthoDB" id="10019422at2759"/>
<dbReference type="Proteomes" id="UP000006702">
    <property type="component" value="Unassembled WGS sequence"/>
</dbReference>
<dbReference type="GO" id="GO:0008824">
    <property type="term" value="F:cyanate hydratase activity"/>
    <property type="evidence" value="ECO:0007669"/>
    <property type="project" value="UniProtKB-UniRule"/>
</dbReference>
<dbReference type="GO" id="GO:0003677">
    <property type="term" value="F:DNA binding"/>
    <property type="evidence" value="ECO:0007669"/>
    <property type="project" value="InterPro"/>
</dbReference>
<dbReference type="GO" id="GO:0009439">
    <property type="term" value="P:cyanate metabolic process"/>
    <property type="evidence" value="ECO:0007669"/>
    <property type="project" value="UniProtKB-UniRule"/>
</dbReference>
<dbReference type="CDD" id="cd00559">
    <property type="entry name" value="Cyanase_C"/>
    <property type="match status" value="1"/>
</dbReference>
<dbReference type="Gene3D" id="3.30.1160.10">
    <property type="entry name" value="Cyanate lyase, C-terminal domain"/>
    <property type="match status" value="1"/>
</dbReference>
<dbReference type="Gene3D" id="1.10.260.40">
    <property type="entry name" value="lambda repressor-like DNA-binding domains"/>
    <property type="match status" value="1"/>
</dbReference>
<dbReference type="HAMAP" id="MF_00535">
    <property type="entry name" value="Cyanate_hydrat"/>
    <property type="match status" value="1"/>
</dbReference>
<dbReference type="InterPro" id="IPR001387">
    <property type="entry name" value="Cro/C1-type_HTH"/>
</dbReference>
<dbReference type="InterPro" id="IPR008076">
    <property type="entry name" value="Cyanase"/>
</dbReference>
<dbReference type="InterPro" id="IPR003712">
    <property type="entry name" value="Cyanate_lyase_C"/>
</dbReference>
<dbReference type="InterPro" id="IPR036581">
    <property type="entry name" value="Cyanate_lyase_C_sf"/>
</dbReference>
<dbReference type="InterPro" id="IPR010982">
    <property type="entry name" value="Lambda_DNA-bd_dom_sf"/>
</dbReference>
<dbReference type="NCBIfam" id="TIGR00673">
    <property type="entry name" value="cynS"/>
    <property type="match status" value="1"/>
</dbReference>
<dbReference type="PANTHER" id="PTHR34186">
    <property type="entry name" value="CYANATE HYDRATASE"/>
    <property type="match status" value="1"/>
</dbReference>
<dbReference type="PANTHER" id="PTHR34186:SF2">
    <property type="entry name" value="CYANATE HYDRATASE"/>
    <property type="match status" value="1"/>
</dbReference>
<dbReference type="Pfam" id="PF02560">
    <property type="entry name" value="Cyanate_lyase"/>
    <property type="match status" value="1"/>
</dbReference>
<dbReference type="PIRSF" id="PIRSF001263">
    <property type="entry name" value="Cyanate_hydratas"/>
    <property type="match status" value="1"/>
</dbReference>
<dbReference type="PRINTS" id="PR01693">
    <property type="entry name" value="CYANASE"/>
</dbReference>
<dbReference type="SMART" id="SM01116">
    <property type="entry name" value="Cyanate_lyase"/>
    <property type="match status" value="1"/>
</dbReference>
<dbReference type="SUPFAM" id="SSF55234">
    <property type="entry name" value="Cyanase C-terminal domain"/>
    <property type="match status" value="1"/>
</dbReference>
<dbReference type="SUPFAM" id="SSF47413">
    <property type="entry name" value="lambda repressor-like DNA-binding domains"/>
    <property type="match status" value="1"/>
</dbReference>
<sequence>MSLATLDATQHPNLPASAATLFKAKAQNKLSFEQIAQHIGRNEVATAALFYGQAKASPEDIQKLSELLNISPQVLEEQLSGFPDRGRSVEMPPKEPLIYRLYEIVQNYGYAYKAVLNEKFGDGIMSAISFSTKVEKETDADGNNWAVITLRGKWLPFSRF</sequence>
<proteinExistence type="inferred from homology"/>
<accession>A1DIL2</accession>
<organism>
    <name type="scientific">Neosartorya fischeri (strain ATCC 1020 / DSM 3700 / CBS 544.65 / FGSC A1164 / JCM 1740 / NRRL 181 / WB 181)</name>
    <name type="common">Aspergillus fischerianus</name>
    <dbReference type="NCBI Taxonomy" id="331117"/>
    <lineage>
        <taxon>Eukaryota</taxon>
        <taxon>Fungi</taxon>
        <taxon>Dikarya</taxon>
        <taxon>Ascomycota</taxon>
        <taxon>Pezizomycotina</taxon>
        <taxon>Eurotiomycetes</taxon>
        <taxon>Eurotiomycetidae</taxon>
        <taxon>Eurotiales</taxon>
        <taxon>Aspergillaceae</taxon>
        <taxon>Aspergillus</taxon>
        <taxon>Aspergillus subgen. Fumigati</taxon>
    </lineage>
</organism>
<reference key="1">
    <citation type="journal article" date="2008" name="PLoS Genet.">
        <title>Genomic islands in the pathogenic filamentous fungus Aspergillus fumigatus.</title>
        <authorList>
            <person name="Fedorova N.D."/>
            <person name="Khaldi N."/>
            <person name="Joardar V.S."/>
            <person name="Maiti R."/>
            <person name="Amedeo P."/>
            <person name="Anderson M.J."/>
            <person name="Crabtree J."/>
            <person name="Silva J.C."/>
            <person name="Badger J.H."/>
            <person name="Albarraq A."/>
            <person name="Angiuoli S."/>
            <person name="Bussey H."/>
            <person name="Bowyer P."/>
            <person name="Cotty P.J."/>
            <person name="Dyer P.S."/>
            <person name="Egan A."/>
            <person name="Galens K."/>
            <person name="Fraser-Liggett C.M."/>
            <person name="Haas B.J."/>
            <person name="Inman J.M."/>
            <person name="Kent R."/>
            <person name="Lemieux S."/>
            <person name="Malavazi I."/>
            <person name="Orvis J."/>
            <person name="Roemer T."/>
            <person name="Ronning C.M."/>
            <person name="Sundaram J.P."/>
            <person name="Sutton G."/>
            <person name="Turner G."/>
            <person name="Venter J.C."/>
            <person name="White O.R."/>
            <person name="Whitty B.R."/>
            <person name="Youngman P."/>
            <person name="Wolfe K.H."/>
            <person name="Goldman G.H."/>
            <person name="Wortman J.R."/>
            <person name="Jiang B."/>
            <person name="Denning D.W."/>
            <person name="Nierman W.C."/>
        </authorList>
    </citation>
    <scope>NUCLEOTIDE SEQUENCE [LARGE SCALE GENOMIC DNA]</scope>
    <source>
        <strain>ATCC 1020 / DSM 3700 / CBS 544.65 / FGSC A1164 / JCM 1740 / NRRL 181 / WB 181</strain>
    </source>
</reference>
<gene>
    <name evidence="1" type="primary">cyn1</name>
    <name type="ORF">NFIA_091790</name>
</gene>
<name>CYNS_NEOFI</name>